<organism>
    <name type="scientific">Ctenomys flamarioni</name>
    <name type="common">Tuco-tuco if the Dunes</name>
    <dbReference type="NCBI Taxonomy" id="88124"/>
    <lineage>
        <taxon>Eukaryota</taxon>
        <taxon>Metazoa</taxon>
        <taxon>Chordata</taxon>
        <taxon>Craniata</taxon>
        <taxon>Vertebrata</taxon>
        <taxon>Euteleostomi</taxon>
        <taxon>Mammalia</taxon>
        <taxon>Eutheria</taxon>
        <taxon>Euarchontoglires</taxon>
        <taxon>Glires</taxon>
        <taxon>Rodentia</taxon>
        <taxon>Hystricomorpha</taxon>
        <taxon>Ctenomyidae</taxon>
        <taxon>Ctenomys</taxon>
    </lineage>
</organism>
<evidence type="ECO:0000250" key="1"/>
<evidence type="ECO:0000250" key="2">
    <source>
        <dbReference type="UniProtKB" id="P00157"/>
    </source>
</evidence>
<evidence type="ECO:0000255" key="3">
    <source>
        <dbReference type="PROSITE-ProRule" id="PRU00967"/>
    </source>
</evidence>
<evidence type="ECO:0000255" key="4">
    <source>
        <dbReference type="PROSITE-ProRule" id="PRU00968"/>
    </source>
</evidence>
<geneLocation type="mitochondrion"/>
<protein>
    <recommendedName>
        <fullName>Cytochrome b</fullName>
    </recommendedName>
    <alternativeName>
        <fullName>Complex III subunit 3</fullName>
    </alternativeName>
    <alternativeName>
        <fullName>Complex III subunit III</fullName>
    </alternativeName>
    <alternativeName>
        <fullName>Cytochrome b-c1 complex subunit 3</fullName>
    </alternativeName>
    <alternativeName>
        <fullName>Ubiquinol-cytochrome-c reductase complex cytochrome b subunit</fullName>
    </alternativeName>
</protein>
<keyword id="KW-0249">Electron transport</keyword>
<keyword id="KW-0349">Heme</keyword>
<keyword id="KW-0408">Iron</keyword>
<keyword id="KW-0472">Membrane</keyword>
<keyword id="KW-0479">Metal-binding</keyword>
<keyword id="KW-0496">Mitochondrion</keyword>
<keyword id="KW-0999">Mitochondrion inner membrane</keyword>
<keyword id="KW-0679">Respiratory chain</keyword>
<keyword id="KW-0812">Transmembrane</keyword>
<keyword id="KW-1133">Transmembrane helix</keyword>
<keyword id="KW-0813">Transport</keyword>
<keyword id="KW-0830">Ubiquinone</keyword>
<name>CYB_CTEFA</name>
<comment type="function">
    <text evidence="2">Component of the ubiquinol-cytochrome c reductase complex (complex III or cytochrome b-c1 complex) that is part of the mitochondrial respiratory chain. The b-c1 complex mediates electron transfer from ubiquinol to cytochrome c. Contributes to the generation of a proton gradient across the mitochondrial membrane that is then used for ATP synthesis.</text>
</comment>
<comment type="cofactor">
    <cofactor evidence="2">
        <name>heme b</name>
        <dbReference type="ChEBI" id="CHEBI:60344"/>
    </cofactor>
    <text evidence="2">Binds 2 heme b groups non-covalently.</text>
</comment>
<comment type="subunit">
    <text evidence="2">The cytochrome bc1 complex contains 11 subunits: 3 respiratory subunits (MT-CYB, CYC1 and UQCRFS1), 2 core proteins (UQCRC1 and UQCRC2) and 6 low-molecular weight proteins (UQCRH/QCR6, UQCRB/QCR7, UQCRQ/QCR8, UQCR10/QCR9, UQCR11/QCR10 and a cleavage product of UQCRFS1). This cytochrome bc1 complex then forms a dimer.</text>
</comment>
<comment type="subcellular location">
    <subcellularLocation>
        <location evidence="2">Mitochondrion inner membrane</location>
        <topology evidence="2">Multi-pass membrane protein</topology>
    </subcellularLocation>
</comment>
<comment type="miscellaneous">
    <text evidence="1">Heme 1 (or BL or b562) is low-potential and absorbs at about 562 nm, and heme 2 (or BH or b566) is high-potential and absorbs at about 566 nm.</text>
</comment>
<comment type="similarity">
    <text evidence="3 4">Belongs to the cytochrome b family.</text>
</comment>
<comment type="caution">
    <text evidence="2">The full-length protein contains only eight transmembrane helices, not nine as predicted by bioinformatics tools.</text>
</comment>
<accession>Q9ZY15</accession>
<dbReference type="EMBL" id="AF119107">
    <property type="protein sequence ID" value="AAD17281.1"/>
    <property type="molecule type" value="Genomic_DNA"/>
</dbReference>
<dbReference type="SMR" id="Q9ZY15"/>
<dbReference type="GO" id="GO:0005743">
    <property type="term" value="C:mitochondrial inner membrane"/>
    <property type="evidence" value="ECO:0007669"/>
    <property type="project" value="UniProtKB-SubCell"/>
</dbReference>
<dbReference type="GO" id="GO:0045275">
    <property type="term" value="C:respiratory chain complex III"/>
    <property type="evidence" value="ECO:0007669"/>
    <property type="project" value="InterPro"/>
</dbReference>
<dbReference type="GO" id="GO:0046872">
    <property type="term" value="F:metal ion binding"/>
    <property type="evidence" value="ECO:0007669"/>
    <property type="project" value="UniProtKB-KW"/>
</dbReference>
<dbReference type="GO" id="GO:0008121">
    <property type="term" value="F:ubiquinol-cytochrome-c reductase activity"/>
    <property type="evidence" value="ECO:0007669"/>
    <property type="project" value="InterPro"/>
</dbReference>
<dbReference type="GO" id="GO:0006122">
    <property type="term" value="P:mitochondrial electron transport, ubiquinol to cytochrome c"/>
    <property type="evidence" value="ECO:0007669"/>
    <property type="project" value="TreeGrafter"/>
</dbReference>
<dbReference type="CDD" id="cd00290">
    <property type="entry name" value="cytochrome_b_C"/>
    <property type="match status" value="1"/>
</dbReference>
<dbReference type="CDD" id="cd00284">
    <property type="entry name" value="Cytochrome_b_N"/>
    <property type="match status" value="1"/>
</dbReference>
<dbReference type="FunFam" id="1.20.810.10:FF:000002">
    <property type="entry name" value="Cytochrome b"/>
    <property type="match status" value="1"/>
</dbReference>
<dbReference type="Gene3D" id="1.20.810.10">
    <property type="entry name" value="Cytochrome Bc1 Complex, Chain C"/>
    <property type="match status" value="1"/>
</dbReference>
<dbReference type="InterPro" id="IPR005798">
    <property type="entry name" value="Cyt_b/b6_C"/>
</dbReference>
<dbReference type="InterPro" id="IPR036150">
    <property type="entry name" value="Cyt_b/b6_C_sf"/>
</dbReference>
<dbReference type="InterPro" id="IPR005797">
    <property type="entry name" value="Cyt_b/b6_N"/>
</dbReference>
<dbReference type="InterPro" id="IPR027387">
    <property type="entry name" value="Cytb/b6-like_sf"/>
</dbReference>
<dbReference type="InterPro" id="IPR030689">
    <property type="entry name" value="Cytochrome_b"/>
</dbReference>
<dbReference type="InterPro" id="IPR048260">
    <property type="entry name" value="Cytochrome_b_C_euk/bac"/>
</dbReference>
<dbReference type="InterPro" id="IPR048259">
    <property type="entry name" value="Cytochrome_b_N_euk/bac"/>
</dbReference>
<dbReference type="InterPro" id="IPR016174">
    <property type="entry name" value="Di-haem_cyt_TM"/>
</dbReference>
<dbReference type="PANTHER" id="PTHR19271">
    <property type="entry name" value="CYTOCHROME B"/>
    <property type="match status" value="1"/>
</dbReference>
<dbReference type="PANTHER" id="PTHR19271:SF16">
    <property type="entry name" value="CYTOCHROME B"/>
    <property type="match status" value="1"/>
</dbReference>
<dbReference type="Pfam" id="PF00032">
    <property type="entry name" value="Cytochrom_B_C"/>
    <property type="match status" value="1"/>
</dbReference>
<dbReference type="Pfam" id="PF00033">
    <property type="entry name" value="Cytochrome_B"/>
    <property type="match status" value="1"/>
</dbReference>
<dbReference type="PIRSF" id="PIRSF038885">
    <property type="entry name" value="COB"/>
    <property type="match status" value="1"/>
</dbReference>
<dbReference type="SUPFAM" id="SSF81648">
    <property type="entry name" value="a domain/subunit of cytochrome bc1 complex (Ubiquinol-cytochrome c reductase)"/>
    <property type="match status" value="1"/>
</dbReference>
<dbReference type="SUPFAM" id="SSF81342">
    <property type="entry name" value="Transmembrane di-heme cytochromes"/>
    <property type="match status" value="1"/>
</dbReference>
<dbReference type="PROSITE" id="PS51003">
    <property type="entry name" value="CYTB_CTER"/>
    <property type="match status" value="1"/>
</dbReference>
<dbReference type="PROSITE" id="PS51002">
    <property type="entry name" value="CYTB_NTER"/>
    <property type="match status" value="1"/>
</dbReference>
<reference key="1">
    <citation type="journal article" date="1999" name="J. Mammal. Evol.">
        <title>Molecular phylogeny of tuco-tucos, genus Ctenomys (Rodentia: Octodontidae): evaluation of the mendocinus species group and the evolution of asymmetric sperm.</title>
        <authorList>
            <person name="D'Elia G."/>
            <person name="Lessa E.P."/>
            <person name="Cook J.A."/>
        </authorList>
    </citation>
    <scope>NUCLEOTIDE SEQUENCE [GENOMIC DNA]</scope>
</reference>
<proteinExistence type="inferred from homology"/>
<feature type="chain" id="PRO_0000255018" description="Cytochrome b">
    <location>
        <begin position="1"/>
        <end position="379"/>
    </location>
</feature>
<feature type="transmembrane region" description="Helical" evidence="2">
    <location>
        <begin position="33"/>
        <end position="53"/>
    </location>
</feature>
<feature type="transmembrane region" description="Helical" evidence="2">
    <location>
        <begin position="77"/>
        <end position="98"/>
    </location>
</feature>
<feature type="transmembrane region" description="Helical" evidence="2">
    <location>
        <begin position="113"/>
        <end position="133"/>
    </location>
</feature>
<feature type="transmembrane region" description="Helical" evidence="2">
    <location>
        <begin position="178"/>
        <end position="198"/>
    </location>
</feature>
<feature type="transmembrane region" description="Helical" evidence="2">
    <location>
        <begin position="226"/>
        <end position="246"/>
    </location>
</feature>
<feature type="transmembrane region" description="Helical" evidence="2">
    <location>
        <begin position="288"/>
        <end position="308"/>
    </location>
</feature>
<feature type="transmembrane region" description="Helical" evidence="2">
    <location>
        <begin position="320"/>
        <end position="340"/>
    </location>
</feature>
<feature type="transmembrane region" description="Helical" evidence="2">
    <location>
        <begin position="347"/>
        <end position="367"/>
    </location>
</feature>
<feature type="binding site" description="axial binding residue" evidence="2">
    <location>
        <position position="83"/>
    </location>
    <ligand>
        <name>heme b</name>
        <dbReference type="ChEBI" id="CHEBI:60344"/>
        <label>b562</label>
    </ligand>
    <ligandPart>
        <name>Fe</name>
        <dbReference type="ChEBI" id="CHEBI:18248"/>
    </ligandPart>
</feature>
<feature type="binding site" description="axial binding residue" evidence="2">
    <location>
        <position position="97"/>
    </location>
    <ligand>
        <name>heme b</name>
        <dbReference type="ChEBI" id="CHEBI:60344"/>
        <label>b566</label>
    </ligand>
    <ligandPart>
        <name>Fe</name>
        <dbReference type="ChEBI" id="CHEBI:18248"/>
    </ligandPart>
</feature>
<feature type="binding site" description="axial binding residue" evidence="2">
    <location>
        <position position="182"/>
    </location>
    <ligand>
        <name>heme b</name>
        <dbReference type="ChEBI" id="CHEBI:60344"/>
        <label>b562</label>
    </ligand>
    <ligandPart>
        <name>Fe</name>
        <dbReference type="ChEBI" id="CHEBI:18248"/>
    </ligandPart>
</feature>
<feature type="binding site" description="axial binding residue" evidence="2">
    <location>
        <position position="196"/>
    </location>
    <ligand>
        <name>heme b</name>
        <dbReference type="ChEBI" id="CHEBI:60344"/>
        <label>b566</label>
    </ligand>
    <ligandPart>
        <name>Fe</name>
        <dbReference type="ChEBI" id="CHEBI:18248"/>
    </ligandPart>
</feature>
<feature type="binding site" evidence="2">
    <location>
        <position position="201"/>
    </location>
    <ligand>
        <name>a ubiquinone</name>
        <dbReference type="ChEBI" id="CHEBI:16389"/>
    </ligand>
</feature>
<sequence>MTNTRKSHPLIKIVNHSFIDLPAPSNISAWWNFGSLLGVCLGLQILTGLFLAMHYTADTTTAFSSVTHICRDVNYGWLIRYMHANGASMFFIFLYFHIGRGIYYGSYTFMDTWNIGVLLLFAVMATAFMGYVLPWGQMSFWGATVITNLLSAIPYIGPTLVEWIWGGFSVDKATLTRFFAFHFILPFIITAMVMIHLLFLHETGSNNPSGMNSDSDKIPFHPYYTIKDILGILFMMTTLMSLVMFTPDLLGDPDNYTPANPLNTPPHIKPEWYFLFAYAILRSIPNKLGGVLALVFSILILMLFPILHSSKQRSMSFRPLSQCLMWMLVANLLILTWIGGQPVEHPFITIGQLASMTYFFIILILMPSTALMENKLLQW</sequence>
<gene>
    <name type="primary">MT-CYB</name>
    <name type="synonym">COB</name>
    <name type="synonym">CYTB</name>
    <name type="synonym">MTCYB</name>
</gene>